<comment type="function">
    <text>This enzyme recycles the H(2) produced by nitrogenase to increase the production of ATP and to protect nitrogenase against inhibition or damage by O(2) under carbon- or phosphate-limited conditions.</text>
</comment>
<comment type="catalytic activity">
    <reaction>
        <text>H2 + A = AH2</text>
        <dbReference type="Rhea" id="RHEA:12116"/>
        <dbReference type="ChEBI" id="CHEBI:13193"/>
        <dbReference type="ChEBI" id="CHEBI:17499"/>
        <dbReference type="ChEBI" id="CHEBI:18276"/>
        <dbReference type="EC" id="1.12.99.6"/>
    </reaction>
</comment>
<comment type="cofactor">
    <cofactor evidence="1">
        <name>[4Fe-4S] cluster</name>
        <dbReference type="ChEBI" id="CHEBI:49883"/>
    </cofactor>
    <text evidence="1">Binds 2 [4Fe-4S] clusters.</text>
</comment>
<comment type="cofactor">
    <cofactor evidence="1">
        <name>[3Fe-4S] cluster</name>
        <dbReference type="ChEBI" id="CHEBI:21137"/>
    </cofactor>
    <text evidence="1">Binds 1 [3Fe-4S] cluster.</text>
</comment>
<comment type="subunit">
    <text>Heterodimer of a large and a small subunit.</text>
</comment>
<comment type="subcellular location">
    <subcellularLocation>
        <location>Cell membrane</location>
        <topology>Peripheral membrane protein</topology>
    </subcellularLocation>
</comment>
<comment type="PTM">
    <text>Predicted to be exported by the Tat system. The position of the signal peptide cleavage has not been experimentally proven.</text>
</comment>
<comment type="similarity">
    <text evidence="3">Belongs to the [NiFe]/[NiFeSe] hydrogenase small subunit family.</text>
</comment>
<comment type="caution">
    <text evidence="3">An expected iron-sulfur cluster ligand Cys residue was not found at position 231 in this sequence. While a Ser residue may serve as an iron-sulfur cluster ligand, it would be expected to seriously alter the redox behavior of this protein.</text>
</comment>
<comment type="sequence caution" evidence="3">
    <conflict type="frameshift">
        <sequence resource="EMBL-CDS" id="CAA37133"/>
    </conflict>
</comment>
<organism>
    <name type="scientific">Azotobacter chroococcum mcd 1</name>
    <dbReference type="NCBI Taxonomy" id="355"/>
    <lineage>
        <taxon>Bacteria</taxon>
        <taxon>Pseudomonadati</taxon>
        <taxon>Pseudomonadota</taxon>
        <taxon>Gammaproteobacteria</taxon>
        <taxon>Pseudomonadales</taxon>
        <taxon>Pseudomonadaceae</taxon>
        <taxon>Azotobacter</taxon>
    </lineage>
</organism>
<protein>
    <recommendedName>
        <fullName>Uptake hydrogenase small subunit</fullName>
        <ecNumber>1.12.99.6</ecNumber>
    </recommendedName>
    <alternativeName>
        <fullName>Hydrogenlyase</fullName>
    </alternativeName>
    <alternativeName>
        <fullName>Membrane-bound hydrogenase small subunit</fullName>
    </alternativeName>
</protein>
<keyword id="KW-0003">3Fe-4S</keyword>
<keyword id="KW-0004">4Fe-4S</keyword>
<keyword id="KW-1003">Cell membrane</keyword>
<keyword id="KW-0408">Iron</keyword>
<keyword id="KW-0411">Iron-sulfur</keyword>
<keyword id="KW-0472">Membrane</keyword>
<keyword id="KW-0479">Metal-binding</keyword>
<keyword id="KW-0560">Oxidoreductase</keyword>
<keyword id="KW-0732">Signal</keyword>
<proteinExistence type="inferred from homology"/>
<sequence length="354" mass="39132">MSQLETXYDVMRRQGITRRSFLKYCSLTGRPCLGPTFAPQIAHAMETRPPTPVVWLHGLECTCCSESFIRSGDPLVKDVVLSMISLDYDDTLMPPRHQGTVEETMRKYKGEYILAVEGNPPLNEDGMFCIVGGKPFLDQLKHAAKDAKAVIAWGSCASWGCVQAAKPNPTQAVPIHKVITDKPMIKVPGCPPIAEVMTGVITYMLTFGKLPELDRQGRPKMFYGQRIHDKSYRRPHFDAGQFVEHWDDEGARKGYCLYKVGCKGPTSYNACSTVRWNEGTSFPIQAGHGCIGCSEDGFWDKGSFYERLTTIPQFGIEKNADQIGPRGRRGSGAAIAAHAAVTAIKRLQNKGDQA</sequence>
<gene>
    <name type="primary">hupA</name>
    <name type="synonym">hupS</name>
</gene>
<evidence type="ECO:0000250" key="1">
    <source>
        <dbReference type="UniProtKB" id="P21853"/>
    </source>
</evidence>
<evidence type="ECO:0000255" key="2">
    <source>
        <dbReference type="PROSITE-ProRule" id="PRU00648"/>
    </source>
</evidence>
<evidence type="ECO:0000305" key="3"/>
<reference key="1">
    <citation type="journal article" date="1990" name="Mol. Microbiol.">
        <title>The identification, characterization, sequencing and mutagenesis of the genes (hupSL) encoding the small and large subunits of the H2-uptake hydrogenase of Azotobacter chroococcum.</title>
        <authorList>
            <person name="Ford C.M."/>
            <person name="Garg N."/>
            <person name="Garg R.P."/>
            <person name="Tibelius K.H."/>
            <person name="Yates M.G."/>
            <person name="Arp D.J."/>
            <person name="Seefeldt L.C."/>
        </authorList>
    </citation>
    <scope>NUCLEOTIDE SEQUENCE [GENOMIC DNA]</scope>
</reference>
<reference key="2">
    <citation type="submission" date="1990-09" db="EMBL/GenBank/DDBJ databases">
        <authorList>
            <person name="Yates M.G."/>
        </authorList>
    </citation>
    <scope>SEQUENCE REVISION TO 184</scope>
</reference>
<feature type="signal peptide" description="Tat-type signal" evidence="2">
    <location>
        <begin position="1"/>
        <end position="44"/>
    </location>
</feature>
<feature type="chain" id="PRO_0000013423" description="Uptake hydrogenase small subunit">
    <location>
        <begin position="45"/>
        <end position="354"/>
    </location>
</feature>
<feature type="binding site" evidence="1">
    <location>
        <position position="61"/>
    </location>
    <ligand>
        <name>[4Fe-4S] cluster</name>
        <dbReference type="ChEBI" id="CHEBI:49883"/>
        <label>1</label>
    </ligand>
</feature>
<feature type="binding site" evidence="1">
    <location>
        <position position="64"/>
    </location>
    <ligand>
        <name>[4Fe-4S] cluster</name>
        <dbReference type="ChEBI" id="CHEBI:49883"/>
        <label>1</label>
    </ligand>
</feature>
<feature type="binding site" evidence="1">
    <location>
        <position position="156"/>
    </location>
    <ligand>
        <name>[4Fe-4S] cluster</name>
        <dbReference type="ChEBI" id="CHEBI:49883"/>
        <label>1</label>
    </ligand>
</feature>
<feature type="binding site" evidence="1">
    <location>
        <position position="190"/>
    </location>
    <ligand>
        <name>[4Fe-4S] cluster</name>
        <dbReference type="ChEBI" id="CHEBI:49883"/>
        <label>1</label>
    </ligand>
</feature>
<feature type="binding site" evidence="1">
    <location>
        <position position="228"/>
    </location>
    <ligand>
        <name>[4Fe-4S] cluster</name>
        <dbReference type="ChEBI" id="CHEBI:49883"/>
        <label>2</label>
    </ligand>
</feature>
<feature type="binding site" evidence="3">
    <location>
        <position position="231"/>
    </location>
    <ligand>
        <name>[4Fe-4S] cluster</name>
        <dbReference type="ChEBI" id="CHEBI:49883"/>
        <label>2</label>
    </ligand>
</feature>
<feature type="binding site" evidence="1">
    <location>
        <position position="256"/>
    </location>
    <ligand>
        <name>[4Fe-4S] cluster</name>
        <dbReference type="ChEBI" id="CHEBI:49883"/>
        <label>2</label>
    </ligand>
</feature>
<feature type="binding site" evidence="1">
    <location>
        <position position="262"/>
    </location>
    <ligand>
        <name>[4Fe-4S] cluster</name>
        <dbReference type="ChEBI" id="CHEBI:49883"/>
        <label>2</label>
    </ligand>
</feature>
<feature type="binding site" evidence="1">
    <location>
        <position position="271"/>
    </location>
    <ligand>
        <name>[3Fe-4S] cluster</name>
        <dbReference type="ChEBI" id="CHEBI:21137"/>
    </ligand>
</feature>
<feature type="binding site" evidence="1">
    <location>
        <position position="290"/>
    </location>
    <ligand>
        <name>[3Fe-4S] cluster</name>
        <dbReference type="ChEBI" id="CHEBI:21137"/>
    </ligand>
</feature>
<feature type="binding site" evidence="1">
    <location>
        <position position="293"/>
    </location>
    <ligand>
        <name>[3Fe-4S] cluster</name>
        <dbReference type="ChEBI" id="CHEBI:21137"/>
    </ligand>
</feature>
<name>MBHS_AZOCH</name>
<accession>P18190</accession>
<dbReference type="EC" id="1.12.99.6"/>
<dbReference type="EMBL" id="X52961">
    <property type="protein sequence ID" value="CAA37133.1"/>
    <property type="status" value="ALT_FRAME"/>
    <property type="molecule type" value="Genomic_DNA"/>
</dbReference>
<dbReference type="GO" id="GO:0044569">
    <property type="term" value="C:[Ni-Fe] hydrogenase complex"/>
    <property type="evidence" value="ECO:0007669"/>
    <property type="project" value="TreeGrafter"/>
</dbReference>
<dbReference type="GO" id="GO:0009375">
    <property type="term" value="C:ferredoxin hydrogenase complex"/>
    <property type="evidence" value="ECO:0007669"/>
    <property type="project" value="InterPro"/>
</dbReference>
<dbReference type="GO" id="GO:0005886">
    <property type="term" value="C:plasma membrane"/>
    <property type="evidence" value="ECO:0007669"/>
    <property type="project" value="UniProtKB-SubCell"/>
</dbReference>
<dbReference type="GO" id="GO:0051538">
    <property type="term" value="F:3 iron, 4 sulfur cluster binding"/>
    <property type="evidence" value="ECO:0007669"/>
    <property type="project" value="UniProtKB-KW"/>
</dbReference>
<dbReference type="GO" id="GO:0051539">
    <property type="term" value="F:4 iron, 4 sulfur cluster binding"/>
    <property type="evidence" value="ECO:0007669"/>
    <property type="project" value="UniProtKB-KW"/>
</dbReference>
<dbReference type="GO" id="GO:0009055">
    <property type="term" value="F:electron transfer activity"/>
    <property type="evidence" value="ECO:0007669"/>
    <property type="project" value="TreeGrafter"/>
</dbReference>
<dbReference type="GO" id="GO:0008901">
    <property type="term" value="F:ferredoxin hydrogenase activity"/>
    <property type="evidence" value="ECO:0007669"/>
    <property type="project" value="InterPro"/>
</dbReference>
<dbReference type="GO" id="GO:0033748">
    <property type="term" value="F:hydrogenase (acceptor) activity"/>
    <property type="evidence" value="ECO:0007669"/>
    <property type="project" value="UniProtKB-EC"/>
</dbReference>
<dbReference type="GO" id="GO:0046872">
    <property type="term" value="F:metal ion binding"/>
    <property type="evidence" value="ECO:0007669"/>
    <property type="project" value="UniProtKB-KW"/>
</dbReference>
<dbReference type="GO" id="GO:0009061">
    <property type="term" value="P:anaerobic respiration"/>
    <property type="evidence" value="ECO:0007669"/>
    <property type="project" value="TreeGrafter"/>
</dbReference>
<dbReference type="Gene3D" id="4.10.480.10">
    <property type="entry name" value="Cytochrome-c3 hydrogenase, C-terminal domain"/>
    <property type="match status" value="1"/>
</dbReference>
<dbReference type="Gene3D" id="3.40.50.700">
    <property type="entry name" value="NADH:ubiquinone oxidoreductase-like, 20kDa subunit"/>
    <property type="match status" value="1"/>
</dbReference>
<dbReference type="InterPro" id="IPR027394">
    <property type="entry name" value="Cytochrome-c3_hydrogenase_C"/>
</dbReference>
<dbReference type="InterPro" id="IPR006137">
    <property type="entry name" value="NADH_UbQ_OxRdtase-like_20kDa"/>
</dbReference>
<dbReference type="InterPro" id="IPR037148">
    <property type="entry name" value="NiFe-Hase_small_C_sf"/>
</dbReference>
<dbReference type="InterPro" id="IPR037024">
    <property type="entry name" value="NiFe_Hase_small_N_sf"/>
</dbReference>
<dbReference type="InterPro" id="IPR001821">
    <property type="entry name" value="NiFe_hydrogenase_ssu"/>
</dbReference>
<dbReference type="InterPro" id="IPR006311">
    <property type="entry name" value="TAT_signal"/>
</dbReference>
<dbReference type="NCBIfam" id="TIGR00391">
    <property type="entry name" value="hydA"/>
    <property type="match status" value="1"/>
</dbReference>
<dbReference type="PANTHER" id="PTHR30013:SF6">
    <property type="entry name" value="HYDROGENASE-1 SMALL CHAIN"/>
    <property type="match status" value="1"/>
</dbReference>
<dbReference type="PANTHER" id="PTHR30013">
    <property type="entry name" value="NIFE / NIFESE HYDROGENASE SMALL SUBUNIT FAMILY MEMBER"/>
    <property type="match status" value="1"/>
</dbReference>
<dbReference type="Pfam" id="PF14720">
    <property type="entry name" value="NiFe_hyd_SSU_C"/>
    <property type="match status" value="1"/>
</dbReference>
<dbReference type="Pfam" id="PF01058">
    <property type="entry name" value="Oxidored_q6"/>
    <property type="match status" value="1"/>
</dbReference>
<dbReference type="PIRSF" id="PIRSF000310">
    <property type="entry name" value="NiFe_hyd_ssu"/>
    <property type="match status" value="1"/>
</dbReference>
<dbReference type="PRINTS" id="PR00614">
    <property type="entry name" value="NIHGNASESMLL"/>
</dbReference>
<dbReference type="SUPFAM" id="SSF56770">
    <property type="entry name" value="HydA/Nqo6-like"/>
    <property type="match status" value="1"/>
</dbReference>
<dbReference type="PROSITE" id="PS51318">
    <property type="entry name" value="TAT"/>
    <property type="match status" value="1"/>
</dbReference>